<name>ILVC_TREPR</name>
<accession>Q8KTR6</accession>
<dbReference type="EC" id="1.1.1.86" evidence="1"/>
<dbReference type="EMBL" id="AF481102">
    <property type="protein sequence ID" value="AAM75982.1"/>
    <property type="molecule type" value="Genomic_DNA"/>
</dbReference>
<dbReference type="SMR" id="Q8KTR6"/>
<dbReference type="STRING" id="1053648.TCP_027"/>
<dbReference type="UniPathway" id="UPA00047">
    <property type="reaction ID" value="UER00056"/>
</dbReference>
<dbReference type="UniPathway" id="UPA00049">
    <property type="reaction ID" value="UER00060"/>
</dbReference>
<dbReference type="GO" id="GO:0005829">
    <property type="term" value="C:cytosol"/>
    <property type="evidence" value="ECO:0007669"/>
    <property type="project" value="TreeGrafter"/>
</dbReference>
<dbReference type="GO" id="GO:0004455">
    <property type="term" value="F:ketol-acid reductoisomerase activity"/>
    <property type="evidence" value="ECO:0007669"/>
    <property type="project" value="UniProtKB-UniRule"/>
</dbReference>
<dbReference type="GO" id="GO:0000287">
    <property type="term" value="F:magnesium ion binding"/>
    <property type="evidence" value="ECO:0007669"/>
    <property type="project" value="UniProtKB-UniRule"/>
</dbReference>
<dbReference type="GO" id="GO:0050661">
    <property type="term" value="F:NADP binding"/>
    <property type="evidence" value="ECO:0007669"/>
    <property type="project" value="InterPro"/>
</dbReference>
<dbReference type="GO" id="GO:0009097">
    <property type="term" value="P:isoleucine biosynthetic process"/>
    <property type="evidence" value="ECO:0007669"/>
    <property type="project" value="UniProtKB-UniRule"/>
</dbReference>
<dbReference type="GO" id="GO:0009099">
    <property type="term" value="P:L-valine biosynthetic process"/>
    <property type="evidence" value="ECO:0007669"/>
    <property type="project" value="UniProtKB-UniRule"/>
</dbReference>
<dbReference type="Gene3D" id="6.10.240.10">
    <property type="match status" value="1"/>
</dbReference>
<dbReference type="Gene3D" id="3.40.50.720">
    <property type="entry name" value="NAD(P)-binding Rossmann-like Domain"/>
    <property type="match status" value="1"/>
</dbReference>
<dbReference type="HAMAP" id="MF_00435">
    <property type="entry name" value="IlvC"/>
    <property type="match status" value="1"/>
</dbReference>
<dbReference type="InterPro" id="IPR008927">
    <property type="entry name" value="6-PGluconate_DH-like_C_sf"/>
</dbReference>
<dbReference type="InterPro" id="IPR013023">
    <property type="entry name" value="KARI"/>
</dbReference>
<dbReference type="InterPro" id="IPR000506">
    <property type="entry name" value="KARI_C"/>
</dbReference>
<dbReference type="InterPro" id="IPR013116">
    <property type="entry name" value="KARI_N"/>
</dbReference>
<dbReference type="InterPro" id="IPR014359">
    <property type="entry name" value="KARI_prok"/>
</dbReference>
<dbReference type="InterPro" id="IPR036291">
    <property type="entry name" value="NAD(P)-bd_dom_sf"/>
</dbReference>
<dbReference type="NCBIfam" id="TIGR00465">
    <property type="entry name" value="ilvC"/>
    <property type="match status" value="1"/>
</dbReference>
<dbReference type="NCBIfam" id="NF004017">
    <property type="entry name" value="PRK05479.1"/>
    <property type="match status" value="1"/>
</dbReference>
<dbReference type="PANTHER" id="PTHR21371">
    <property type="entry name" value="KETOL-ACID REDUCTOISOMERASE, MITOCHONDRIAL"/>
    <property type="match status" value="1"/>
</dbReference>
<dbReference type="PANTHER" id="PTHR21371:SF1">
    <property type="entry name" value="KETOL-ACID REDUCTOISOMERASE, MITOCHONDRIAL"/>
    <property type="match status" value="1"/>
</dbReference>
<dbReference type="Pfam" id="PF01450">
    <property type="entry name" value="KARI_C"/>
    <property type="match status" value="1"/>
</dbReference>
<dbReference type="Pfam" id="PF07991">
    <property type="entry name" value="KARI_N"/>
    <property type="match status" value="1"/>
</dbReference>
<dbReference type="PIRSF" id="PIRSF000116">
    <property type="entry name" value="IlvC_gammaproteo"/>
    <property type="match status" value="1"/>
</dbReference>
<dbReference type="SUPFAM" id="SSF48179">
    <property type="entry name" value="6-phosphogluconate dehydrogenase C-terminal domain-like"/>
    <property type="match status" value="1"/>
</dbReference>
<dbReference type="SUPFAM" id="SSF51735">
    <property type="entry name" value="NAD(P)-binding Rossmann-fold domains"/>
    <property type="match status" value="1"/>
</dbReference>
<dbReference type="PROSITE" id="PS51851">
    <property type="entry name" value="KARI_C"/>
    <property type="match status" value="1"/>
</dbReference>
<dbReference type="PROSITE" id="PS51850">
    <property type="entry name" value="KARI_N"/>
    <property type="match status" value="1"/>
</dbReference>
<proteinExistence type="inferred from homology"/>
<comment type="function">
    <text evidence="1">Involved in the biosynthesis of branched-chain amino acids (BCAA). Catalyzes an alkyl-migration followed by a ketol-acid reduction of (S)-2-acetolactate (S2AL) to yield (R)-2,3-dihydroxy-isovalerate. In the isomerase reaction, S2AL is rearranged via a Mg-dependent methyl migration to produce 3-hydroxy-3-methyl-2-ketobutyrate (HMKB). In the reductase reaction, this 2-ketoacid undergoes a metal-dependent reduction by NADPH to yield (R)-2,3-dihydroxy-isovalerate.</text>
</comment>
<comment type="catalytic activity">
    <reaction evidence="1">
        <text>(2R)-2,3-dihydroxy-3-methylbutanoate + NADP(+) = (2S)-2-acetolactate + NADPH + H(+)</text>
        <dbReference type="Rhea" id="RHEA:22068"/>
        <dbReference type="ChEBI" id="CHEBI:15378"/>
        <dbReference type="ChEBI" id="CHEBI:49072"/>
        <dbReference type="ChEBI" id="CHEBI:57783"/>
        <dbReference type="ChEBI" id="CHEBI:58349"/>
        <dbReference type="ChEBI" id="CHEBI:58476"/>
        <dbReference type="EC" id="1.1.1.86"/>
    </reaction>
</comment>
<comment type="catalytic activity">
    <reaction evidence="1">
        <text>(2R,3R)-2,3-dihydroxy-3-methylpentanoate + NADP(+) = (S)-2-ethyl-2-hydroxy-3-oxobutanoate + NADPH + H(+)</text>
        <dbReference type="Rhea" id="RHEA:13493"/>
        <dbReference type="ChEBI" id="CHEBI:15378"/>
        <dbReference type="ChEBI" id="CHEBI:49256"/>
        <dbReference type="ChEBI" id="CHEBI:49258"/>
        <dbReference type="ChEBI" id="CHEBI:57783"/>
        <dbReference type="ChEBI" id="CHEBI:58349"/>
        <dbReference type="EC" id="1.1.1.86"/>
    </reaction>
</comment>
<comment type="cofactor">
    <cofactor evidence="1">
        <name>Mg(2+)</name>
        <dbReference type="ChEBI" id="CHEBI:18420"/>
    </cofactor>
    <text evidence="1">Binds 2 magnesium ions per subunit.</text>
</comment>
<comment type="pathway">
    <text evidence="1">Amino-acid biosynthesis; L-isoleucine biosynthesis; L-isoleucine from 2-oxobutanoate: step 2/4.</text>
</comment>
<comment type="pathway">
    <text evidence="1">Amino-acid biosynthesis; L-valine biosynthesis; L-valine from pyruvate: step 2/4.</text>
</comment>
<comment type="similarity">
    <text evidence="1">Belongs to the ketol-acid reductoisomerase family.</text>
</comment>
<feature type="chain" id="PRO_0000151299" description="Ketol-acid reductoisomerase (NADP(+))">
    <location>
        <begin position="1"/>
        <end position="328"/>
    </location>
</feature>
<feature type="domain" description="KARI N-terminal Rossmann" evidence="2">
    <location>
        <begin position="1"/>
        <end position="179"/>
    </location>
</feature>
<feature type="domain" description="KARI C-terminal knotted" evidence="3">
    <location>
        <begin position="180"/>
        <end position="325"/>
    </location>
</feature>
<feature type="active site" evidence="1">
    <location>
        <position position="106"/>
    </location>
</feature>
<feature type="binding site" evidence="1">
    <location>
        <begin position="24"/>
        <end position="27"/>
    </location>
    <ligand>
        <name>NADP(+)</name>
        <dbReference type="ChEBI" id="CHEBI:58349"/>
    </ligand>
</feature>
<feature type="binding site" evidence="1">
    <location>
        <position position="47"/>
    </location>
    <ligand>
        <name>NADP(+)</name>
        <dbReference type="ChEBI" id="CHEBI:58349"/>
    </ligand>
</feature>
<feature type="binding site" evidence="1">
    <location>
        <position position="51"/>
    </location>
    <ligand>
        <name>NADP(+)</name>
        <dbReference type="ChEBI" id="CHEBI:58349"/>
    </ligand>
</feature>
<feature type="binding site" evidence="1">
    <location>
        <position position="132"/>
    </location>
    <ligand>
        <name>NADP(+)</name>
        <dbReference type="ChEBI" id="CHEBI:58349"/>
    </ligand>
</feature>
<feature type="binding site" evidence="1">
    <location>
        <position position="188"/>
    </location>
    <ligand>
        <name>Mg(2+)</name>
        <dbReference type="ChEBI" id="CHEBI:18420"/>
        <label>1</label>
    </ligand>
</feature>
<feature type="binding site" evidence="1">
    <location>
        <position position="188"/>
    </location>
    <ligand>
        <name>Mg(2+)</name>
        <dbReference type="ChEBI" id="CHEBI:18420"/>
        <label>2</label>
    </ligand>
</feature>
<feature type="binding site" evidence="1">
    <location>
        <position position="192"/>
    </location>
    <ligand>
        <name>Mg(2+)</name>
        <dbReference type="ChEBI" id="CHEBI:18420"/>
        <label>1</label>
    </ligand>
</feature>
<feature type="binding site" evidence="1">
    <location>
        <position position="224"/>
    </location>
    <ligand>
        <name>Mg(2+)</name>
        <dbReference type="ChEBI" id="CHEBI:18420"/>
        <label>2</label>
    </ligand>
</feature>
<feature type="binding site" evidence="1">
    <location>
        <position position="228"/>
    </location>
    <ligand>
        <name>Mg(2+)</name>
        <dbReference type="ChEBI" id="CHEBI:18420"/>
        <label>2</label>
    </ligand>
</feature>
<feature type="binding site" evidence="1">
    <location>
        <position position="249"/>
    </location>
    <ligand>
        <name>substrate</name>
    </ligand>
</feature>
<sequence>MRVLYERDGDVSIIRERVVAVVGYGSQGRAHAMNLRDSGVEVVIGLRPGPSFDAAMSDGFMPRSVQEAVSIADVAMLLTPDECMADVYAKAVRDYLRPGASVAFAHGFNVCYNQIPIGNGVGAFMAAPKAPGHMVRETYIAGWGTPHLVAAKPQCEHLRALAVSYAIANGGGAAGIIETTFVDETETDLFGEQAVLCGGLVELIRAGFDTLVSSGYEPELAYFECMHEMKLIVDVMNRGGVAALNESISNNAEYGEYVSGPRVIGAAVRSAMRRVLNDIRTGRYAKDFIMEGRSNSPTLTACRRAVGEHPIEAVGARLRSRMTCAHGT</sequence>
<evidence type="ECO:0000255" key="1">
    <source>
        <dbReference type="HAMAP-Rule" id="MF_00435"/>
    </source>
</evidence>
<evidence type="ECO:0000255" key="2">
    <source>
        <dbReference type="PROSITE-ProRule" id="PRU01197"/>
    </source>
</evidence>
<evidence type="ECO:0000255" key="3">
    <source>
        <dbReference type="PROSITE-ProRule" id="PRU01198"/>
    </source>
</evidence>
<keyword id="KW-0028">Amino-acid biosynthesis</keyword>
<keyword id="KW-0100">Branched-chain amino acid biosynthesis</keyword>
<keyword id="KW-0460">Magnesium</keyword>
<keyword id="KW-0479">Metal-binding</keyword>
<keyword id="KW-0521">NADP</keyword>
<keyword id="KW-0560">Oxidoreductase</keyword>
<organism>
    <name type="scientific">Tremblaya princeps</name>
    <dbReference type="NCBI Taxonomy" id="189385"/>
    <lineage>
        <taxon>Bacteria</taxon>
        <taxon>Pseudomonadati</taxon>
        <taxon>Pseudomonadota</taxon>
        <taxon>Betaproteobacteria</taxon>
        <taxon>Candidatus Tremblaya</taxon>
    </lineage>
</organism>
<reference key="1">
    <citation type="journal article" date="2002" name="Appl. Environ. Microbiol.">
        <title>The genetic properties of the primary endosymbionts of mealybugs differ from those of other endosymbionts of plant sap-sucking insects.</title>
        <authorList>
            <person name="Baumann L."/>
            <person name="Thao M.L."/>
            <person name="Hess J.M."/>
            <person name="Johnson M.W."/>
            <person name="Baumann P."/>
        </authorList>
    </citation>
    <scope>NUCLEOTIDE SEQUENCE [GENOMIC DNA]</scope>
</reference>
<gene>
    <name evidence="1" type="primary">ilvC</name>
</gene>
<protein>
    <recommendedName>
        <fullName evidence="1">Ketol-acid reductoisomerase (NADP(+))</fullName>
        <shortName evidence="1">KARI</shortName>
        <ecNumber evidence="1">1.1.1.86</ecNumber>
    </recommendedName>
    <alternativeName>
        <fullName evidence="1">Acetohydroxy-acid isomeroreductase</fullName>
        <shortName evidence="1">AHIR</shortName>
    </alternativeName>
    <alternativeName>
        <fullName evidence="1">Alpha-keto-beta-hydroxylacyl reductoisomerase</fullName>
    </alternativeName>
    <alternativeName>
        <fullName evidence="1">Ketol-acid reductoisomerase type 1</fullName>
    </alternativeName>
    <alternativeName>
        <fullName evidence="1">Ketol-acid reductoisomerase type I</fullName>
    </alternativeName>
</protein>